<name>RS9_PORG3</name>
<evidence type="ECO:0000255" key="1">
    <source>
        <dbReference type="HAMAP-Rule" id="MF_00532"/>
    </source>
</evidence>
<evidence type="ECO:0000256" key="2">
    <source>
        <dbReference type="SAM" id="MobiDB-lite"/>
    </source>
</evidence>
<evidence type="ECO:0000305" key="3"/>
<sequence length="128" mass="14526">MDYINAIGRRKAAVARVYLSEGSGKIVINKREIEQYFPSSILQYIVKQPLLKLDVAAKYDIKINLRGGGFKGQSEAARLAIARALVKINPDDKPALRSEGFITRDPRVVERKKPGRPKARKRFQFSKR</sequence>
<proteinExistence type="inferred from homology"/>
<reference key="1">
    <citation type="journal article" date="2008" name="DNA Res.">
        <title>Determination of the genome sequence of Porphyromonas gingivalis strain ATCC 33277 and genomic comparison with strain W83 revealed extensive genome rearrangements in P. gingivalis.</title>
        <authorList>
            <person name="Naito M."/>
            <person name="Hirakawa H."/>
            <person name="Yamashita A."/>
            <person name="Ohara N."/>
            <person name="Shoji M."/>
            <person name="Yukitake H."/>
            <person name="Nakayama K."/>
            <person name="Toh H."/>
            <person name="Yoshimura F."/>
            <person name="Kuhara S."/>
            <person name="Hattori M."/>
            <person name="Hayashi T."/>
            <person name="Nakayama K."/>
        </authorList>
    </citation>
    <scope>NUCLEOTIDE SEQUENCE [LARGE SCALE GENOMIC DNA]</scope>
    <source>
        <strain>ATCC 33277 / DSM 20709 / CIP 103683 / JCM 12257 / NCTC 11834 / 2561</strain>
    </source>
</reference>
<protein>
    <recommendedName>
        <fullName evidence="1">Small ribosomal subunit protein uS9</fullName>
    </recommendedName>
    <alternativeName>
        <fullName evidence="3">30S ribosomal protein S9</fullName>
    </alternativeName>
</protein>
<accession>B2RL63</accession>
<comment type="similarity">
    <text evidence="1">Belongs to the universal ribosomal protein uS9 family.</text>
</comment>
<dbReference type="EMBL" id="AP009380">
    <property type="protein sequence ID" value="BAG34108.1"/>
    <property type="molecule type" value="Genomic_DNA"/>
</dbReference>
<dbReference type="RefSeq" id="WP_004584903.1">
    <property type="nucleotide sequence ID" value="NZ_CP025930.1"/>
</dbReference>
<dbReference type="SMR" id="B2RL63"/>
<dbReference type="GeneID" id="29256764"/>
<dbReference type="KEGG" id="pgn:PGN_1589"/>
<dbReference type="eggNOG" id="COG0103">
    <property type="taxonomic scope" value="Bacteria"/>
</dbReference>
<dbReference type="HOGENOM" id="CLU_046483_2_1_10"/>
<dbReference type="OrthoDB" id="9803965at2"/>
<dbReference type="BioCyc" id="PGIN431947:G1G2V-1790-MONOMER"/>
<dbReference type="Proteomes" id="UP000008842">
    <property type="component" value="Chromosome"/>
</dbReference>
<dbReference type="GO" id="GO:0022627">
    <property type="term" value="C:cytosolic small ribosomal subunit"/>
    <property type="evidence" value="ECO:0007669"/>
    <property type="project" value="TreeGrafter"/>
</dbReference>
<dbReference type="GO" id="GO:0003723">
    <property type="term" value="F:RNA binding"/>
    <property type="evidence" value="ECO:0007669"/>
    <property type="project" value="TreeGrafter"/>
</dbReference>
<dbReference type="GO" id="GO:0003735">
    <property type="term" value="F:structural constituent of ribosome"/>
    <property type="evidence" value="ECO:0007669"/>
    <property type="project" value="InterPro"/>
</dbReference>
<dbReference type="GO" id="GO:0006412">
    <property type="term" value="P:translation"/>
    <property type="evidence" value="ECO:0007669"/>
    <property type="project" value="UniProtKB-UniRule"/>
</dbReference>
<dbReference type="FunFam" id="3.30.230.10:FF:000001">
    <property type="entry name" value="30S ribosomal protein S9"/>
    <property type="match status" value="1"/>
</dbReference>
<dbReference type="Gene3D" id="3.30.230.10">
    <property type="match status" value="1"/>
</dbReference>
<dbReference type="HAMAP" id="MF_00532_B">
    <property type="entry name" value="Ribosomal_uS9_B"/>
    <property type="match status" value="1"/>
</dbReference>
<dbReference type="InterPro" id="IPR020568">
    <property type="entry name" value="Ribosomal_Su5_D2-typ_SF"/>
</dbReference>
<dbReference type="InterPro" id="IPR000754">
    <property type="entry name" value="Ribosomal_uS9"/>
</dbReference>
<dbReference type="InterPro" id="IPR023035">
    <property type="entry name" value="Ribosomal_uS9_bac/plastid"/>
</dbReference>
<dbReference type="InterPro" id="IPR020574">
    <property type="entry name" value="Ribosomal_uS9_CS"/>
</dbReference>
<dbReference type="InterPro" id="IPR014721">
    <property type="entry name" value="Ribsml_uS5_D2-typ_fold_subgr"/>
</dbReference>
<dbReference type="NCBIfam" id="NF001099">
    <property type="entry name" value="PRK00132.1"/>
    <property type="match status" value="1"/>
</dbReference>
<dbReference type="PANTHER" id="PTHR21569">
    <property type="entry name" value="RIBOSOMAL PROTEIN S9"/>
    <property type="match status" value="1"/>
</dbReference>
<dbReference type="PANTHER" id="PTHR21569:SF1">
    <property type="entry name" value="SMALL RIBOSOMAL SUBUNIT PROTEIN US9M"/>
    <property type="match status" value="1"/>
</dbReference>
<dbReference type="Pfam" id="PF00380">
    <property type="entry name" value="Ribosomal_S9"/>
    <property type="match status" value="1"/>
</dbReference>
<dbReference type="SUPFAM" id="SSF54211">
    <property type="entry name" value="Ribosomal protein S5 domain 2-like"/>
    <property type="match status" value="1"/>
</dbReference>
<dbReference type="PROSITE" id="PS00360">
    <property type="entry name" value="RIBOSOMAL_S9"/>
    <property type="match status" value="1"/>
</dbReference>
<gene>
    <name evidence="1" type="primary">rpsI</name>
    <name type="ordered locus">PGN_1589</name>
</gene>
<organism>
    <name type="scientific">Porphyromonas gingivalis (strain ATCC 33277 / DSM 20709 / CIP 103683 / JCM 12257 / NCTC 11834 / 2561)</name>
    <dbReference type="NCBI Taxonomy" id="431947"/>
    <lineage>
        <taxon>Bacteria</taxon>
        <taxon>Pseudomonadati</taxon>
        <taxon>Bacteroidota</taxon>
        <taxon>Bacteroidia</taxon>
        <taxon>Bacteroidales</taxon>
        <taxon>Porphyromonadaceae</taxon>
        <taxon>Porphyromonas</taxon>
    </lineage>
</organism>
<keyword id="KW-0687">Ribonucleoprotein</keyword>
<keyword id="KW-0689">Ribosomal protein</keyword>
<feature type="chain" id="PRO_1000128151" description="Small ribosomal subunit protein uS9">
    <location>
        <begin position="1"/>
        <end position="128"/>
    </location>
</feature>
<feature type="region of interest" description="Disordered" evidence="2">
    <location>
        <begin position="106"/>
        <end position="128"/>
    </location>
</feature>
<feature type="compositionally biased region" description="Basic residues" evidence="2">
    <location>
        <begin position="113"/>
        <end position="128"/>
    </location>
</feature>